<protein>
    <recommendedName>
        <fullName evidence="1">Xaa-Pro dipeptidase</fullName>
        <shortName evidence="1">X-Pro dipeptidase</shortName>
        <ecNumber evidence="1">3.4.13.9</ecNumber>
    </recommendedName>
    <alternativeName>
        <fullName evidence="1">Imidodipeptidase</fullName>
    </alternativeName>
    <alternativeName>
        <fullName evidence="1">Proline dipeptidase</fullName>
        <shortName evidence="1">Prolidase</shortName>
    </alternativeName>
</protein>
<evidence type="ECO:0000255" key="1">
    <source>
        <dbReference type="HAMAP-Rule" id="MF_01279"/>
    </source>
</evidence>
<proteinExistence type="inferred from homology"/>
<feature type="chain" id="PRO_0000303859" description="Xaa-Pro dipeptidase">
    <location>
        <begin position="1"/>
        <end position="439"/>
    </location>
</feature>
<feature type="binding site" evidence="1">
    <location>
        <position position="244"/>
    </location>
    <ligand>
        <name>Mn(2+)</name>
        <dbReference type="ChEBI" id="CHEBI:29035"/>
        <label>2</label>
    </ligand>
</feature>
<feature type="binding site" evidence="1">
    <location>
        <position position="255"/>
    </location>
    <ligand>
        <name>Mn(2+)</name>
        <dbReference type="ChEBI" id="CHEBI:29035"/>
        <label>1</label>
    </ligand>
</feature>
<feature type="binding site" evidence="1">
    <location>
        <position position="255"/>
    </location>
    <ligand>
        <name>Mn(2+)</name>
        <dbReference type="ChEBI" id="CHEBI:29035"/>
        <label>2</label>
    </ligand>
</feature>
<feature type="binding site" evidence="1">
    <location>
        <position position="335"/>
    </location>
    <ligand>
        <name>Mn(2+)</name>
        <dbReference type="ChEBI" id="CHEBI:29035"/>
        <label>1</label>
    </ligand>
</feature>
<feature type="binding site" evidence="1">
    <location>
        <position position="380"/>
    </location>
    <ligand>
        <name>Mn(2+)</name>
        <dbReference type="ChEBI" id="CHEBI:29035"/>
        <label>1</label>
    </ligand>
</feature>
<feature type="binding site" evidence="1">
    <location>
        <position position="418"/>
    </location>
    <ligand>
        <name>Mn(2+)</name>
        <dbReference type="ChEBI" id="CHEBI:29035"/>
        <label>1</label>
    </ligand>
</feature>
<feature type="binding site" evidence="1">
    <location>
        <position position="418"/>
    </location>
    <ligand>
        <name>Mn(2+)</name>
        <dbReference type="ChEBI" id="CHEBI:29035"/>
        <label>2</label>
    </ligand>
</feature>
<dbReference type="EC" id="3.4.13.9" evidence="1"/>
<dbReference type="EMBL" id="CP000447">
    <property type="protein sequence ID" value="ABI69877.1"/>
    <property type="molecule type" value="Genomic_DNA"/>
</dbReference>
<dbReference type="RefSeq" id="WP_011635506.1">
    <property type="nucleotide sequence ID" value="NC_008345.1"/>
</dbReference>
<dbReference type="SMR" id="Q08A38"/>
<dbReference type="STRING" id="318167.Sfri_0014"/>
<dbReference type="MEROPS" id="M24.003"/>
<dbReference type="KEGG" id="sfr:Sfri_0014"/>
<dbReference type="eggNOG" id="COG0006">
    <property type="taxonomic scope" value="Bacteria"/>
</dbReference>
<dbReference type="HOGENOM" id="CLU_050675_0_0_6"/>
<dbReference type="OrthoDB" id="9806388at2"/>
<dbReference type="Proteomes" id="UP000000684">
    <property type="component" value="Chromosome"/>
</dbReference>
<dbReference type="GO" id="GO:0005829">
    <property type="term" value="C:cytosol"/>
    <property type="evidence" value="ECO:0007669"/>
    <property type="project" value="TreeGrafter"/>
</dbReference>
<dbReference type="GO" id="GO:0004177">
    <property type="term" value="F:aminopeptidase activity"/>
    <property type="evidence" value="ECO:0007669"/>
    <property type="project" value="TreeGrafter"/>
</dbReference>
<dbReference type="GO" id="GO:0046872">
    <property type="term" value="F:metal ion binding"/>
    <property type="evidence" value="ECO:0007669"/>
    <property type="project" value="UniProtKB-KW"/>
</dbReference>
<dbReference type="GO" id="GO:0008235">
    <property type="term" value="F:metalloexopeptidase activity"/>
    <property type="evidence" value="ECO:0007669"/>
    <property type="project" value="UniProtKB-UniRule"/>
</dbReference>
<dbReference type="GO" id="GO:0016795">
    <property type="term" value="F:phosphoric triester hydrolase activity"/>
    <property type="evidence" value="ECO:0007669"/>
    <property type="project" value="InterPro"/>
</dbReference>
<dbReference type="GO" id="GO:0102009">
    <property type="term" value="F:proline dipeptidase activity"/>
    <property type="evidence" value="ECO:0007669"/>
    <property type="project" value="UniProtKB-EC"/>
</dbReference>
<dbReference type="GO" id="GO:0006508">
    <property type="term" value="P:proteolysis"/>
    <property type="evidence" value="ECO:0007669"/>
    <property type="project" value="UniProtKB-KW"/>
</dbReference>
<dbReference type="CDD" id="cd01087">
    <property type="entry name" value="Prolidase"/>
    <property type="match status" value="1"/>
</dbReference>
<dbReference type="Gene3D" id="3.90.230.10">
    <property type="entry name" value="Creatinase/methionine aminopeptidase superfamily"/>
    <property type="match status" value="1"/>
</dbReference>
<dbReference type="Gene3D" id="3.40.350.10">
    <property type="entry name" value="Creatinase/prolidase N-terminal domain"/>
    <property type="match status" value="1"/>
</dbReference>
<dbReference type="HAMAP" id="MF_01279">
    <property type="entry name" value="X_Pro_dipeptid"/>
    <property type="match status" value="1"/>
</dbReference>
<dbReference type="InterPro" id="IPR029149">
    <property type="entry name" value="Creatin/AminoP/Spt16_N"/>
</dbReference>
<dbReference type="InterPro" id="IPR036005">
    <property type="entry name" value="Creatinase/aminopeptidase-like"/>
</dbReference>
<dbReference type="InterPro" id="IPR048819">
    <property type="entry name" value="PepQ_N"/>
</dbReference>
<dbReference type="InterPro" id="IPR000994">
    <property type="entry name" value="Pept_M24"/>
</dbReference>
<dbReference type="InterPro" id="IPR001131">
    <property type="entry name" value="Peptidase_M24B_aminopep-P_CS"/>
</dbReference>
<dbReference type="InterPro" id="IPR052433">
    <property type="entry name" value="X-Pro_dipept-like"/>
</dbReference>
<dbReference type="InterPro" id="IPR022846">
    <property type="entry name" value="X_Pro_dipept"/>
</dbReference>
<dbReference type="NCBIfam" id="NF010133">
    <property type="entry name" value="PRK13607.1"/>
    <property type="match status" value="1"/>
</dbReference>
<dbReference type="PANTHER" id="PTHR43226">
    <property type="entry name" value="XAA-PRO AMINOPEPTIDASE 3"/>
    <property type="match status" value="1"/>
</dbReference>
<dbReference type="PANTHER" id="PTHR43226:SF8">
    <property type="entry name" value="XAA-PRO DIPEPTIDASE"/>
    <property type="match status" value="1"/>
</dbReference>
<dbReference type="Pfam" id="PF21216">
    <property type="entry name" value="PepQ_N"/>
    <property type="match status" value="1"/>
</dbReference>
<dbReference type="Pfam" id="PF00557">
    <property type="entry name" value="Peptidase_M24"/>
    <property type="match status" value="1"/>
</dbReference>
<dbReference type="SUPFAM" id="SSF55920">
    <property type="entry name" value="Creatinase/aminopeptidase"/>
    <property type="match status" value="1"/>
</dbReference>
<dbReference type="PROSITE" id="PS00491">
    <property type="entry name" value="PROLINE_PEPTIDASE"/>
    <property type="match status" value="1"/>
</dbReference>
<keyword id="KW-0224">Dipeptidase</keyword>
<keyword id="KW-0378">Hydrolase</keyword>
<keyword id="KW-0464">Manganese</keyword>
<keyword id="KW-0479">Metal-binding</keyword>
<keyword id="KW-0482">Metalloprotease</keyword>
<keyword id="KW-0645">Protease</keyword>
<keyword id="KW-1185">Reference proteome</keyword>
<name>PEPQ_SHEFN</name>
<comment type="function">
    <text evidence="1">Splits dipeptides with a prolyl residue in the C-terminal position.</text>
</comment>
<comment type="catalytic activity">
    <reaction evidence="1">
        <text>Xaa-L-Pro dipeptide + H2O = an L-alpha-amino acid + L-proline</text>
        <dbReference type="Rhea" id="RHEA:76407"/>
        <dbReference type="ChEBI" id="CHEBI:15377"/>
        <dbReference type="ChEBI" id="CHEBI:59869"/>
        <dbReference type="ChEBI" id="CHEBI:60039"/>
        <dbReference type="ChEBI" id="CHEBI:195196"/>
        <dbReference type="EC" id="3.4.13.9"/>
    </reaction>
</comment>
<comment type="cofactor">
    <cofactor evidence="1">
        <name>Mn(2+)</name>
        <dbReference type="ChEBI" id="CHEBI:29035"/>
    </cofactor>
    <text evidence="1">Binds 2 manganese ions per subunit.</text>
</comment>
<comment type="similarity">
    <text evidence="1">Belongs to the peptidase M24B family. Bacterial-type prolidase subfamily.</text>
</comment>
<organism>
    <name type="scientific">Shewanella frigidimarina (strain NCIMB 400)</name>
    <dbReference type="NCBI Taxonomy" id="318167"/>
    <lineage>
        <taxon>Bacteria</taxon>
        <taxon>Pseudomonadati</taxon>
        <taxon>Pseudomonadota</taxon>
        <taxon>Gammaproteobacteria</taxon>
        <taxon>Alteromonadales</taxon>
        <taxon>Shewanellaceae</taxon>
        <taxon>Shewanella</taxon>
    </lineage>
</organism>
<reference key="1">
    <citation type="submission" date="2006-08" db="EMBL/GenBank/DDBJ databases">
        <title>Complete sequence of Shewanella frigidimarina NCIMB 400.</title>
        <authorList>
            <consortium name="US DOE Joint Genome Institute"/>
            <person name="Copeland A."/>
            <person name="Lucas S."/>
            <person name="Lapidus A."/>
            <person name="Barry K."/>
            <person name="Detter J.C."/>
            <person name="Glavina del Rio T."/>
            <person name="Hammon N."/>
            <person name="Israni S."/>
            <person name="Dalin E."/>
            <person name="Tice H."/>
            <person name="Pitluck S."/>
            <person name="Fredrickson J.K."/>
            <person name="Kolker E."/>
            <person name="McCuel L.A."/>
            <person name="DiChristina T."/>
            <person name="Nealson K.H."/>
            <person name="Newman D."/>
            <person name="Tiedje J.M."/>
            <person name="Zhou J."/>
            <person name="Romine M.F."/>
            <person name="Culley D.E."/>
            <person name="Serres M."/>
            <person name="Chertkov O."/>
            <person name="Brettin T."/>
            <person name="Bruce D."/>
            <person name="Han C."/>
            <person name="Tapia R."/>
            <person name="Gilna P."/>
            <person name="Schmutz J."/>
            <person name="Larimer F."/>
            <person name="Land M."/>
            <person name="Hauser L."/>
            <person name="Kyrpides N."/>
            <person name="Mikhailova N."/>
            <person name="Richardson P."/>
        </authorList>
    </citation>
    <scope>NUCLEOTIDE SEQUENCE [LARGE SCALE GENOMIC DNA]</scope>
    <source>
        <strain>NCIMB 400</strain>
    </source>
</reference>
<sequence length="439" mass="49799">MDQLAHLYHAHMAELNRRVGEICQRENLSGLVIHSGQPHRQFLDDLNYPFKVNPQFKAWLPILDTPNCWVIANGQDKPTLVFYRPVDFWHKVNDVPQAFWTEHFDIQLLTKPDRIADFLPKDLASWAYIGEHLDVADVLGFAARNPDAVMNYLHYHRADKTQYELECMRRANQIAVKGHLAAKNAFYDGASEFEIQQRYLLEIGQGENEVPYGNIVALNQNAAILHYTALEHVKPAQRLSFLIDAGASYHGYAADITRTYSFEKNRFYELIVALDKVQLAIIEQMKPGVKYVDLHIATHHYIGQLLIDFGLANGTAEQLVAQGVTSAFFPHGLGHMLGLQVHDMGGYSHDERGTHIAAPEAHPFLRCTRVLAANQVLTIEPGLYIIDTLLNQLSATAKQAINWTTVDEMRPFGGIRIEDNVIVHQDRVENMTREFGLVD</sequence>
<gene>
    <name evidence="1" type="primary">pepQ</name>
    <name type="ordered locus">Sfri_0014</name>
</gene>
<accession>Q08A38</accession>